<accession>Q8ZQ25</accession>
<feature type="chain" id="PRO_0000173340" description="Multidrug resistance protein MdtG">
    <location>
        <begin position="1"/>
        <end position="404"/>
    </location>
</feature>
<feature type="transmembrane region" description="Helical" evidence="1">
    <location>
        <begin position="19"/>
        <end position="39"/>
    </location>
</feature>
<feature type="transmembrane region" description="Helical" evidence="1">
    <location>
        <begin position="56"/>
        <end position="76"/>
    </location>
</feature>
<feature type="transmembrane region" description="Helical" evidence="1">
    <location>
        <begin position="90"/>
        <end position="110"/>
    </location>
</feature>
<feature type="transmembrane region" description="Helical" evidence="1">
    <location>
        <begin position="113"/>
        <end position="133"/>
    </location>
</feature>
<feature type="transmembrane region" description="Helical" evidence="1">
    <location>
        <begin position="144"/>
        <end position="164"/>
    </location>
</feature>
<feature type="transmembrane region" description="Helical" evidence="1">
    <location>
        <begin position="171"/>
        <end position="191"/>
    </location>
</feature>
<feature type="transmembrane region" description="Helical" evidence="1">
    <location>
        <begin position="222"/>
        <end position="242"/>
    </location>
</feature>
<feature type="transmembrane region" description="Helical" evidence="1">
    <location>
        <begin position="254"/>
        <end position="274"/>
    </location>
</feature>
<feature type="transmembrane region" description="Helical" evidence="1">
    <location>
        <begin position="288"/>
        <end position="308"/>
    </location>
</feature>
<feature type="transmembrane region" description="Helical" evidence="1">
    <location>
        <begin position="317"/>
        <end position="337"/>
    </location>
</feature>
<feature type="transmembrane region" description="Helical" evidence="1">
    <location>
        <begin position="376"/>
        <end position="396"/>
    </location>
</feature>
<gene>
    <name evidence="1" type="primary">mdtG</name>
    <name type="ordered locus">STM1154</name>
</gene>
<proteinExistence type="inferred from homology"/>
<reference key="1">
    <citation type="journal article" date="2001" name="Nature">
        <title>Complete genome sequence of Salmonella enterica serovar Typhimurium LT2.</title>
        <authorList>
            <person name="McClelland M."/>
            <person name="Sanderson K.E."/>
            <person name="Spieth J."/>
            <person name="Clifton S.W."/>
            <person name="Latreille P."/>
            <person name="Courtney L."/>
            <person name="Porwollik S."/>
            <person name="Ali J."/>
            <person name="Dante M."/>
            <person name="Du F."/>
            <person name="Hou S."/>
            <person name="Layman D."/>
            <person name="Leonard S."/>
            <person name="Nguyen C."/>
            <person name="Scott K."/>
            <person name="Holmes A."/>
            <person name="Grewal N."/>
            <person name="Mulvaney E."/>
            <person name="Ryan E."/>
            <person name="Sun H."/>
            <person name="Florea L."/>
            <person name="Miller W."/>
            <person name="Stoneking T."/>
            <person name="Nhan M."/>
            <person name="Waterston R."/>
            <person name="Wilson R.K."/>
        </authorList>
    </citation>
    <scope>NUCLEOTIDE SEQUENCE [LARGE SCALE GENOMIC DNA]</scope>
    <source>
        <strain>LT2 / SGSC1412 / ATCC 700720</strain>
    </source>
</reference>
<organism>
    <name type="scientific">Salmonella typhimurium (strain LT2 / SGSC1412 / ATCC 700720)</name>
    <dbReference type="NCBI Taxonomy" id="99287"/>
    <lineage>
        <taxon>Bacteria</taxon>
        <taxon>Pseudomonadati</taxon>
        <taxon>Pseudomonadota</taxon>
        <taxon>Gammaproteobacteria</taxon>
        <taxon>Enterobacterales</taxon>
        <taxon>Enterobacteriaceae</taxon>
        <taxon>Salmonella</taxon>
    </lineage>
</organism>
<protein>
    <recommendedName>
        <fullName evidence="1">Multidrug resistance protein MdtG</fullName>
    </recommendedName>
</protein>
<keyword id="KW-0997">Cell inner membrane</keyword>
<keyword id="KW-1003">Cell membrane</keyword>
<keyword id="KW-0472">Membrane</keyword>
<keyword id="KW-1185">Reference proteome</keyword>
<keyword id="KW-0812">Transmembrane</keyword>
<keyword id="KW-1133">Transmembrane helix</keyword>
<keyword id="KW-0813">Transport</keyword>
<sequence>MSPSDVPINWKRNLTVTWLGCFLTGAAFSLVMPFLPLYVEQLGVTGHSALNMWSGLVFSITFLFSAIASPFWGGLADRKGRKIMLLRSALGMAIVMLLMGMAQNIWQFLILRALLGLLGGFIPNANALIATQVPRHKSGWALGTLSTGGVSGALLGPLAGGLLADHYGLRPVFFITASVLFICFLLTFFFIRENFLPVSKKEMLHVREVVASLKNPRLVLSLFVTTLIIQVATGSIAPILTLYVRELAGDVSNIAFISGMIASVPGVAALLSAPRLGKLGDRIGPEKILIVALIISVLLLIPMSFVQTPWQLALLRFLLGAADGALLPAVQTLLVYNSTNQIAGRIFSYNQSFRDIGNVTGPLMGAAISASYGFRAVFCVTAGVVLFNAIYSWNSLRRRRLAIE</sequence>
<dbReference type="EMBL" id="AE006468">
    <property type="protein sequence ID" value="AAL20084.1"/>
    <property type="molecule type" value="Genomic_DNA"/>
</dbReference>
<dbReference type="RefSeq" id="WP_000075048.1">
    <property type="nucleotide sequence ID" value="NC_003197.2"/>
</dbReference>
<dbReference type="SMR" id="Q8ZQ25"/>
<dbReference type="STRING" id="99287.STM1154"/>
<dbReference type="PaxDb" id="99287-STM1154"/>
<dbReference type="KEGG" id="stm:STM1154"/>
<dbReference type="PATRIC" id="fig|99287.12.peg.1221"/>
<dbReference type="HOGENOM" id="CLU_001265_57_3_6"/>
<dbReference type="OMA" id="GGHFGMR"/>
<dbReference type="PhylomeDB" id="Q8ZQ25"/>
<dbReference type="BioCyc" id="SENT99287:STM1154-MONOMER"/>
<dbReference type="Proteomes" id="UP000001014">
    <property type="component" value="Chromosome"/>
</dbReference>
<dbReference type="GO" id="GO:0005886">
    <property type="term" value="C:plasma membrane"/>
    <property type="evidence" value="ECO:0007669"/>
    <property type="project" value="UniProtKB-SubCell"/>
</dbReference>
<dbReference type="GO" id="GO:0022857">
    <property type="term" value="F:transmembrane transporter activity"/>
    <property type="evidence" value="ECO:0007669"/>
    <property type="project" value="UniProtKB-UniRule"/>
</dbReference>
<dbReference type="CDD" id="cd17391">
    <property type="entry name" value="MFS_MdtG_MDR_like"/>
    <property type="match status" value="1"/>
</dbReference>
<dbReference type="FunFam" id="1.20.1250.20:FF:000020">
    <property type="entry name" value="Multidrug resistance protein MdtG"/>
    <property type="match status" value="1"/>
</dbReference>
<dbReference type="FunFam" id="1.20.1250.20:FF:000022">
    <property type="entry name" value="Multidrug resistance protein MdtG"/>
    <property type="match status" value="1"/>
</dbReference>
<dbReference type="Gene3D" id="1.20.1250.20">
    <property type="entry name" value="MFS general substrate transporter like domains"/>
    <property type="match status" value="2"/>
</dbReference>
<dbReference type="HAMAP" id="MF_01528">
    <property type="entry name" value="MFS_MdtG"/>
    <property type="match status" value="1"/>
</dbReference>
<dbReference type="InterPro" id="IPR011701">
    <property type="entry name" value="MFS"/>
</dbReference>
<dbReference type="InterPro" id="IPR020846">
    <property type="entry name" value="MFS_dom"/>
</dbReference>
<dbReference type="InterPro" id="IPR050497">
    <property type="entry name" value="MFS_MdtG_subfamily"/>
</dbReference>
<dbReference type="InterPro" id="IPR005828">
    <property type="entry name" value="MFS_sugar_transport-like"/>
</dbReference>
<dbReference type="InterPro" id="IPR036259">
    <property type="entry name" value="MFS_trans_sf"/>
</dbReference>
<dbReference type="InterPro" id="IPR023692">
    <property type="entry name" value="Mutidrug-R_MdtG"/>
</dbReference>
<dbReference type="InterPro" id="IPR001958">
    <property type="entry name" value="Tet-R_TetA/multi-R_MdtG-like"/>
</dbReference>
<dbReference type="NCBIfam" id="NF007372">
    <property type="entry name" value="PRK09874.1"/>
    <property type="match status" value="1"/>
</dbReference>
<dbReference type="PANTHER" id="PTHR43414">
    <property type="entry name" value="MULTIDRUG RESISTANCE PROTEIN MDTG"/>
    <property type="match status" value="1"/>
</dbReference>
<dbReference type="PANTHER" id="PTHR43414:SF6">
    <property type="entry name" value="MULTIDRUG RESISTANCE PROTEIN MDTG"/>
    <property type="match status" value="1"/>
</dbReference>
<dbReference type="Pfam" id="PF07690">
    <property type="entry name" value="MFS_1"/>
    <property type="match status" value="1"/>
</dbReference>
<dbReference type="Pfam" id="PF00083">
    <property type="entry name" value="Sugar_tr"/>
    <property type="match status" value="1"/>
</dbReference>
<dbReference type="PRINTS" id="PR01035">
    <property type="entry name" value="TCRTETA"/>
</dbReference>
<dbReference type="SUPFAM" id="SSF103473">
    <property type="entry name" value="MFS general substrate transporter"/>
    <property type="match status" value="1"/>
</dbReference>
<dbReference type="PROSITE" id="PS50850">
    <property type="entry name" value="MFS"/>
    <property type="match status" value="1"/>
</dbReference>
<comment type="subcellular location">
    <subcellularLocation>
        <location evidence="1">Cell inner membrane</location>
        <topology evidence="1">Multi-pass membrane protein</topology>
    </subcellularLocation>
</comment>
<comment type="similarity">
    <text evidence="1">Belongs to the major facilitator superfamily. DHA1 family. MdtG (TC 2.A.1.2.20) subfamily.</text>
</comment>
<name>MDTG_SALTY</name>
<evidence type="ECO:0000255" key="1">
    <source>
        <dbReference type="HAMAP-Rule" id="MF_01528"/>
    </source>
</evidence>